<comment type="function">
    <text evidence="1">Endonuclease that catalyzes the cleavage of RNA on the 3' side of pyrimidine nucleotides. Acts on single-stranded and double-stranded RNA (By similarity).</text>
</comment>
<comment type="catalytic activity">
    <reaction evidence="2">
        <text>an [RNA] containing cytidine + H2O = an [RNA]-3'-cytidine-3'-phosphate + a 5'-hydroxy-ribonucleotide-3'-[RNA].</text>
        <dbReference type="EC" id="4.6.1.18"/>
    </reaction>
</comment>
<comment type="catalytic activity">
    <reaction evidence="2">
        <text>an [RNA] containing uridine + H2O = an [RNA]-3'-uridine-3'-phosphate + a 5'-hydroxy-ribonucleotide-3'-[RNA].</text>
        <dbReference type="EC" id="4.6.1.18"/>
    </reaction>
</comment>
<comment type="subunit">
    <text evidence="1">Monomer. Interacts with and forms tight 1:1 complexes with RNH1. Dimerization of two such complexes may occur. Interaction with RNH1 inhibits this protein (By similarity).</text>
</comment>
<comment type="subcellular location">
    <subcellularLocation>
        <location evidence="4">Secreted</location>
    </subcellularLocation>
</comment>
<comment type="mass spectrometry" mass="12942.1" method="MALDI" evidence="4"/>
<comment type="mass spectrometry" mass="12967.8" method="MALDI" evidence="4">
    <text>Variant Leu-37.</text>
</comment>
<comment type="similarity">
    <text evidence="3">Belongs to the pancreatic ribonuclease family.</text>
</comment>
<sequence length="119" mass="12947">ETRYEKFLRQHVDYPRTAAPDTRTYCNQMMQRRGMTSPVCKFTNTFVHASAASITTICGPGGAPAGGNLRDSTASFALTTCRLQGGSQRPPCNYNGGTSTQRIRIACDGGLPVHYDRAI</sequence>
<dbReference type="EC" id="4.6.1.18" evidence="2"/>
<dbReference type="PDB" id="2ZPO">
    <property type="method" value="X-ray"/>
    <property type="resolution" value="1.60 A"/>
    <property type="chains" value="A=1-119"/>
</dbReference>
<dbReference type="PDBsum" id="2ZPO"/>
<dbReference type="SMR" id="P84844"/>
<dbReference type="eggNOG" id="ENOG502S9Q1">
    <property type="taxonomic scope" value="Eukaryota"/>
</dbReference>
<dbReference type="EvolutionaryTrace" id="P84844"/>
<dbReference type="GO" id="GO:0005576">
    <property type="term" value="C:extracellular region"/>
    <property type="evidence" value="ECO:0007669"/>
    <property type="project" value="UniProtKB-SubCell"/>
</dbReference>
<dbReference type="GO" id="GO:0016829">
    <property type="term" value="F:lyase activity"/>
    <property type="evidence" value="ECO:0007669"/>
    <property type="project" value="UniProtKB-KW"/>
</dbReference>
<dbReference type="GO" id="GO:0003676">
    <property type="term" value="F:nucleic acid binding"/>
    <property type="evidence" value="ECO:0007669"/>
    <property type="project" value="InterPro"/>
</dbReference>
<dbReference type="GO" id="GO:0004522">
    <property type="term" value="F:ribonuclease A activity"/>
    <property type="evidence" value="ECO:0007669"/>
    <property type="project" value="UniProtKB-EC"/>
</dbReference>
<dbReference type="GO" id="GO:0050830">
    <property type="term" value="P:defense response to Gram-positive bacterium"/>
    <property type="evidence" value="ECO:0007669"/>
    <property type="project" value="TreeGrafter"/>
</dbReference>
<dbReference type="CDD" id="cd06265">
    <property type="entry name" value="RNase_A_canonical"/>
    <property type="match status" value="1"/>
</dbReference>
<dbReference type="FunFam" id="3.10.130.10:FF:000001">
    <property type="entry name" value="Ribonuclease pancreatic"/>
    <property type="match status" value="1"/>
</dbReference>
<dbReference type="Gene3D" id="3.10.130.10">
    <property type="entry name" value="Ribonuclease A-like domain"/>
    <property type="match status" value="1"/>
</dbReference>
<dbReference type="InterPro" id="IPR001427">
    <property type="entry name" value="RNaseA"/>
</dbReference>
<dbReference type="InterPro" id="IPR036816">
    <property type="entry name" value="RNaseA-like_dom_sf"/>
</dbReference>
<dbReference type="InterPro" id="IPR023411">
    <property type="entry name" value="RNaseA_AS"/>
</dbReference>
<dbReference type="InterPro" id="IPR023412">
    <property type="entry name" value="RNaseA_domain"/>
</dbReference>
<dbReference type="PANTHER" id="PTHR11437:SF10">
    <property type="entry name" value="ANGIOGENIN-RELATED"/>
    <property type="match status" value="1"/>
</dbReference>
<dbReference type="PANTHER" id="PTHR11437">
    <property type="entry name" value="RIBONUCLEASE"/>
    <property type="match status" value="1"/>
</dbReference>
<dbReference type="Pfam" id="PF00074">
    <property type="entry name" value="RnaseA"/>
    <property type="match status" value="1"/>
</dbReference>
<dbReference type="PRINTS" id="PR00794">
    <property type="entry name" value="RIBONUCLEASE"/>
</dbReference>
<dbReference type="SMART" id="SM00092">
    <property type="entry name" value="RNAse_Pc"/>
    <property type="match status" value="1"/>
</dbReference>
<dbReference type="SUPFAM" id="SSF54076">
    <property type="entry name" value="RNase A-like"/>
    <property type="match status" value="1"/>
</dbReference>
<dbReference type="PROSITE" id="PS00127">
    <property type="entry name" value="RNASE_PANCREATIC"/>
    <property type="match status" value="1"/>
</dbReference>
<name>RNAS1_CHEMY</name>
<feature type="chain" id="PRO_0000234484" description="Ribonuclease">
    <location>
        <begin position="1"/>
        <end position="119"/>
    </location>
</feature>
<feature type="active site" description="Proton acceptor" evidence="2">
    <location>
        <position position="11"/>
    </location>
</feature>
<feature type="active site" description="Proton donor" evidence="2">
    <location>
        <position position="114"/>
    </location>
</feature>
<feature type="binding site" evidence="1">
    <location>
        <position position="6"/>
    </location>
    <ligand>
        <name>substrate</name>
    </ligand>
</feature>
<feature type="binding site" evidence="1">
    <location>
        <position position="9"/>
    </location>
    <ligand>
        <name>substrate</name>
    </ligand>
</feature>
<feature type="binding site" evidence="2">
    <location>
        <begin position="41"/>
        <end position="45"/>
    </location>
    <ligand>
        <name>substrate</name>
    </ligand>
</feature>
<feature type="binding site" evidence="1">
    <location>
        <position position="82"/>
    </location>
    <ligand>
        <name>substrate</name>
    </ligand>
</feature>
<feature type="disulfide bond" evidence="5">
    <location>
        <begin position="26"/>
        <end position="81"/>
    </location>
</feature>
<feature type="disulfide bond" evidence="5">
    <location>
        <begin position="40"/>
        <end position="92"/>
    </location>
</feature>
<feature type="disulfide bond" evidence="5">
    <location>
        <begin position="58"/>
        <end position="107"/>
    </location>
</feature>
<feature type="sequence variant" evidence="4">
    <original>S</original>
    <variation>L</variation>
    <location>
        <position position="37"/>
    </location>
</feature>
<feature type="helix" evidence="6">
    <location>
        <begin position="3"/>
        <end position="11"/>
    </location>
</feature>
<feature type="helix" evidence="6">
    <location>
        <begin position="22"/>
        <end position="32"/>
    </location>
</feature>
<feature type="strand" evidence="6">
    <location>
        <begin position="36"/>
        <end position="39"/>
    </location>
</feature>
<feature type="strand" evidence="6">
    <location>
        <begin position="42"/>
        <end position="47"/>
    </location>
</feature>
<feature type="helix" evidence="6">
    <location>
        <begin position="51"/>
        <end position="55"/>
    </location>
</feature>
<feature type="helix" evidence="6">
    <location>
        <begin position="56"/>
        <end position="58"/>
    </location>
</feature>
<feature type="turn" evidence="6">
    <location>
        <begin position="59"/>
        <end position="61"/>
    </location>
</feature>
<feature type="strand" evidence="6">
    <location>
        <begin position="62"/>
        <end position="64"/>
    </location>
</feature>
<feature type="strand" evidence="6">
    <location>
        <begin position="69"/>
        <end position="74"/>
    </location>
</feature>
<feature type="strand" evidence="6">
    <location>
        <begin position="76"/>
        <end position="86"/>
    </location>
</feature>
<feature type="strand" evidence="6">
    <location>
        <begin position="94"/>
        <end position="101"/>
    </location>
</feature>
<feature type="strand" evidence="6">
    <location>
        <begin position="103"/>
        <end position="108"/>
    </location>
</feature>
<feature type="strand" evidence="6">
    <location>
        <begin position="111"/>
        <end position="118"/>
    </location>
</feature>
<proteinExistence type="evidence at protein level"/>
<evidence type="ECO:0000250" key="1"/>
<evidence type="ECO:0000250" key="2">
    <source>
        <dbReference type="UniProtKB" id="P07998"/>
    </source>
</evidence>
<evidence type="ECO:0000255" key="3"/>
<evidence type="ECO:0000269" key="4">
    <source>
    </source>
</evidence>
<evidence type="ECO:0000269" key="5">
    <source>
    </source>
</evidence>
<evidence type="ECO:0007829" key="6">
    <source>
        <dbReference type="PDB" id="2ZPO"/>
    </source>
</evidence>
<protein>
    <recommendedName>
        <fullName>Ribonuclease</fullName>
        <ecNumber evidence="2">4.6.1.18</ecNumber>
    </recommendedName>
</protein>
<accession>P84844</accession>
<keyword id="KW-0002">3D-structure</keyword>
<keyword id="KW-0903">Direct protein sequencing</keyword>
<keyword id="KW-1015">Disulfide bond</keyword>
<keyword id="KW-0255">Endonuclease</keyword>
<keyword id="KW-0378">Hydrolase</keyword>
<keyword id="KW-0456">Lyase</keyword>
<keyword id="KW-0540">Nuclease</keyword>
<keyword id="KW-0964">Secreted</keyword>
<organism>
    <name type="scientific">Chelonia mydas</name>
    <name type="common">Green sea-turtle</name>
    <name type="synonym">Chelonia agassizi</name>
    <dbReference type="NCBI Taxonomy" id="8469"/>
    <lineage>
        <taxon>Eukaryota</taxon>
        <taxon>Metazoa</taxon>
        <taxon>Chordata</taxon>
        <taxon>Craniata</taxon>
        <taxon>Vertebrata</taxon>
        <taxon>Euteleostomi</taxon>
        <taxon>Archelosauria</taxon>
        <taxon>Testudinata</taxon>
        <taxon>Testudines</taxon>
        <taxon>Cryptodira</taxon>
        <taxon>Durocryptodira</taxon>
        <taxon>Americhelydia</taxon>
        <taxon>Chelonioidea</taxon>
        <taxon>Cheloniidae</taxon>
        <taxon>Chelonia</taxon>
    </lineage>
</organism>
<reference key="1">
    <citation type="journal article" date="2006" name="Protein J.">
        <title>The complete amino acid sequence of green turtle (Chelonia mydas) egg white ribonuclease.</title>
        <authorList>
            <person name="Katekaew S."/>
            <person name="Torikata T."/>
            <person name="Araki T."/>
        </authorList>
    </citation>
    <scope>PROTEIN SEQUENCE</scope>
    <scope>SUBCELLULAR LOCATION</scope>
    <scope>MASS SPECTROMETRY</scope>
    <scope>VARIANT LEU-37</scope>
    <source>
        <tissue>Egg white</tissue>
    </source>
</reference>
<reference key="2">
    <citation type="journal article" date="2010" name="Acta Crystallogr. F">
        <title>Structure of the newly found green turtle egg-white ribonuclease.</title>
        <authorList>
            <person name="Katekaew S."/>
            <person name="Kuaprasert B."/>
            <person name="Torikata T."/>
            <person name="Kakuta Y."/>
            <person name="Kimura M."/>
            <person name="Yoneda K."/>
            <person name="Araki T."/>
        </authorList>
    </citation>
    <scope>X-RAY CRYSTALLOGRAPHY (1.6 ANGSTROMS)</scope>
    <scope>DISULFIDE BONDS</scope>
</reference>